<sequence length="136" mass="15597">MLDNGFSFPVRVYYEDTDAGGVVYHARYLHFFERARTEYLRTLNFTQQTLLEEQQLAFVVKTLAIDYCVAAKLDDLLMVETEVSEVKGATILFEQRLMRNTLMLSKATVKVACVDLGKMKPVAFPKEVKAAFHHLK</sequence>
<protein>
    <recommendedName>
        <fullName>Acyl-CoA thioesterase YbgC</fullName>
        <ecNumber>3.1.2.-</ecNumber>
    </recommendedName>
</protein>
<name>YBGC_HAEIN</name>
<proteinExistence type="evidence at protein level"/>
<reference key="1">
    <citation type="journal article" date="1995" name="Science">
        <title>Whole-genome random sequencing and assembly of Haemophilus influenzae Rd.</title>
        <authorList>
            <person name="Fleischmann R.D."/>
            <person name="Adams M.D."/>
            <person name="White O."/>
            <person name="Clayton R.A."/>
            <person name="Kirkness E.F."/>
            <person name="Kerlavage A.R."/>
            <person name="Bult C.J."/>
            <person name="Tomb J.-F."/>
            <person name="Dougherty B.A."/>
            <person name="Merrick J.M."/>
            <person name="McKenney K."/>
            <person name="Sutton G.G."/>
            <person name="FitzHugh W."/>
            <person name="Fields C.A."/>
            <person name="Gocayne J.D."/>
            <person name="Scott J.D."/>
            <person name="Shirley R."/>
            <person name="Liu L.-I."/>
            <person name="Glodek A."/>
            <person name="Kelley J.M."/>
            <person name="Weidman J.F."/>
            <person name="Phillips C.A."/>
            <person name="Spriggs T."/>
            <person name="Hedblom E."/>
            <person name="Cotton M.D."/>
            <person name="Utterback T.R."/>
            <person name="Hanna M.C."/>
            <person name="Nguyen D.T."/>
            <person name="Saudek D.M."/>
            <person name="Brandon R.C."/>
            <person name="Fine L.D."/>
            <person name="Fritchman J.L."/>
            <person name="Fuhrmann J.L."/>
            <person name="Geoghagen N.S.M."/>
            <person name="Gnehm C.L."/>
            <person name="McDonald L.A."/>
            <person name="Small K.V."/>
            <person name="Fraser C.M."/>
            <person name="Smith H.O."/>
            <person name="Venter J.C."/>
        </authorList>
    </citation>
    <scope>NUCLEOTIDE SEQUENCE [LARGE SCALE GENOMIC DNA]</scope>
    <source>
        <strain>ATCC 51907 / DSM 11121 / KW20 / Rd</strain>
    </source>
</reference>
<reference key="2">
    <citation type="journal article" date="2002" name="FEBS Lett.">
        <title>The YbgC protein encoded by the ybgC gene of the tol-pal gene cluster of Haemophilus influenzae catalyzes acyl-coenzyme A thioester hydrolysis.</title>
        <authorList>
            <person name="Zhuang Z."/>
            <person name="Song F."/>
            <person name="Martin B.M."/>
            <person name="Dunaway-Mariano D."/>
        </authorList>
    </citation>
    <scope>FUNCTION</scope>
    <scope>MUTAGENESIS OF ASP-18</scope>
    <scope>ACTIVE SITE</scope>
    <scope>BIOPHYSICOCHEMICAL PROPERTIES</scope>
</reference>
<evidence type="ECO:0000255" key="1">
    <source>
        <dbReference type="PROSITE-ProRule" id="PRU10041"/>
    </source>
</evidence>
<evidence type="ECO:0000269" key="2">
    <source>
    </source>
</evidence>
<evidence type="ECO:0000305" key="3"/>
<keyword id="KW-0378">Hydrolase</keyword>
<keyword id="KW-1185">Reference proteome</keyword>
<organism>
    <name type="scientific">Haemophilus influenzae (strain ATCC 51907 / DSM 11121 / KW20 / Rd)</name>
    <dbReference type="NCBI Taxonomy" id="71421"/>
    <lineage>
        <taxon>Bacteria</taxon>
        <taxon>Pseudomonadati</taxon>
        <taxon>Pseudomonadota</taxon>
        <taxon>Gammaproteobacteria</taxon>
        <taxon>Pasteurellales</taxon>
        <taxon>Pasteurellaceae</taxon>
        <taxon>Haemophilus</taxon>
    </lineage>
</organism>
<comment type="function">
    <text evidence="2">Displays acyl-CoA thioesterase activity with short chain aliphatic acyl-CoA thioesters, such as propionyl-CoA and butyryl-CoA. Enzyme activity is relatively low, suggesting that the acyl-CoA thioesters used in the assays are not the physiological substrates. Has no detectable activity with 4-hydroxybenzoyl-CoA, lauroyl-CoA (C12:0), arachidoyl-CoA (C20:0) and arachidonoyl-CoA (C20:4).</text>
</comment>
<comment type="biophysicochemical properties">
    <kinetics>
        <KM evidence="2">11 mM for propionyl-CoA</KM>
        <KM evidence="2">16 mM for iso-butyryl-CoA</KM>
        <KM evidence="2">24 mM for n-butyryl-CoA</KM>
        <KM evidence="2">20 mM for D,L-beta-hydroxybutyryl-CoA</KM>
        <text>kcat is 0.44 sec(-1) with propionyl-CoA, 0.54 sec(-1) with iso-butyryl-CoA and 0.17 sec(-1) with n-butyryl-CoA.</text>
    </kinetics>
</comment>
<comment type="similarity">
    <text evidence="3">Belongs to the 4-hydroxybenzoyl-CoA thioesterase family.</text>
</comment>
<dbReference type="EC" id="3.1.2.-"/>
<dbReference type="EMBL" id="L42023">
    <property type="protein sequence ID" value="AAC22044.1"/>
    <property type="molecule type" value="Genomic_DNA"/>
</dbReference>
<dbReference type="PIR" id="H64150">
    <property type="entry name" value="H64150"/>
</dbReference>
<dbReference type="RefSeq" id="NP_438547.1">
    <property type="nucleotide sequence ID" value="NC_000907.1"/>
</dbReference>
<dbReference type="SMR" id="P44679"/>
<dbReference type="STRING" id="71421.HI_0386"/>
<dbReference type="EnsemblBacteria" id="AAC22044">
    <property type="protein sequence ID" value="AAC22044"/>
    <property type="gene ID" value="HI_0386"/>
</dbReference>
<dbReference type="KEGG" id="hin:HI_0386"/>
<dbReference type="PATRIC" id="fig|71421.8.peg.404"/>
<dbReference type="eggNOG" id="COG0824">
    <property type="taxonomic scope" value="Bacteria"/>
</dbReference>
<dbReference type="HOGENOM" id="CLU_101141_7_1_6"/>
<dbReference type="OrthoDB" id="9808429at2"/>
<dbReference type="PhylomeDB" id="P44679"/>
<dbReference type="BioCyc" id="HINF71421:G1GJ1-401-MONOMER"/>
<dbReference type="Proteomes" id="UP000000579">
    <property type="component" value="Chromosome"/>
</dbReference>
<dbReference type="GO" id="GO:0047617">
    <property type="term" value="F:fatty acyl-CoA hydrolase activity"/>
    <property type="evidence" value="ECO:0000318"/>
    <property type="project" value="GO_Central"/>
</dbReference>
<dbReference type="CDD" id="cd00586">
    <property type="entry name" value="4HBT"/>
    <property type="match status" value="1"/>
</dbReference>
<dbReference type="FunFam" id="3.10.129.10:FF:000004">
    <property type="entry name" value="Tol-pal system-associated acyl-CoA thioesterase"/>
    <property type="match status" value="1"/>
</dbReference>
<dbReference type="Gene3D" id="3.10.129.10">
    <property type="entry name" value="Hotdog Thioesterase"/>
    <property type="match status" value="1"/>
</dbReference>
<dbReference type="InterPro" id="IPR050563">
    <property type="entry name" value="4-hydroxybenzoyl-CoA_TE"/>
</dbReference>
<dbReference type="InterPro" id="IPR008272">
    <property type="entry name" value="HB-CoA_thioesterase_AS"/>
</dbReference>
<dbReference type="InterPro" id="IPR029069">
    <property type="entry name" value="HotDog_dom_sf"/>
</dbReference>
<dbReference type="InterPro" id="IPR014166">
    <property type="entry name" value="Tol-Pal_acyl-CoA_thioesterase"/>
</dbReference>
<dbReference type="InterPro" id="IPR006684">
    <property type="entry name" value="YbgC/YbaW"/>
</dbReference>
<dbReference type="NCBIfam" id="TIGR02799">
    <property type="entry name" value="thio_ybgC"/>
    <property type="match status" value="1"/>
</dbReference>
<dbReference type="NCBIfam" id="TIGR00051">
    <property type="entry name" value="YbgC/FadM family acyl-CoA thioesterase"/>
    <property type="match status" value="1"/>
</dbReference>
<dbReference type="PANTHER" id="PTHR31793">
    <property type="entry name" value="4-HYDROXYBENZOYL-COA THIOESTERASE FAMILY MEMBER"/>
    <property type="match status" value="1"/>
</dbReference>
<dbReference type="PANTHER" id="PTHR31793:SF37">
    <property type="entry name" value="ACYL-COA THIOESTER HYDROLASE YBGC"/>
    <property type="match status" value="1"/>
</dbReference>
<dbReference type="Pfam" id="PF13279">
    <property type="entry name" value="4HBT_2"/>
    <property type="match status" value="1"/>
</dbReference>
<dbReference type="PIRSF" id="PIRSF003230">
    <property type="entry name" value="YbgC"/>
    <property type="match status" value="1"/>
</dbReference>
<dbReference type="SUPFAM" id="SSF54637">
    <property type="entry name" value="Thioesterase/thiol ester dehydrase-isomerase"/>
    <property type="match status" value="1"/>
</dbReference>
<dbReference type="PROSITE" id="PS01328">
    <property type="entry name" value="4HBCOA_THIOESTERASE"/>
    <property type="match status" value="1"/>
</dbReference>
<accession>P44679</accession>
<feature type="chain" id="PRO_0000087766" description="Acyl-CoA thioesterase YbgC">
    <location>
        <begin position="1"/>
        <end position="136"/>
    </location>
</feature>
<feature type="active site" evidence="1 2">
    <location>
        <position position="18"/>
    </location>
</feature>
<feature type="mutagenesis site" description="Abolishes enzyme activity." evidence="2">
    <original>D</original>
    <variation>N</variation>
    <location>
        <position position="18"/>
    </location>
</feature>
<gene>
    <name type="primary">ybgC</name>
    <name type="ordered locus">HI_0386</name>
</gene>